<name>LEXA_HYPNA</name>
<evidence type="ECO:0000255" key="1">
    <source>
        <dbReference type="HAMAP-Rule" id="MF_00015"/>
    </source>
</evidence>
<proteinExistence type="inferred from homology"/>
<reference key="1">
    <citation type="journal article" date="2006" name="J. Bacteriol.">
        <title>Comparative genomic evidence for a close relationship between the dimorphic prosthecate bacteria Hyphomonas neptunium and Caulobacter crescentus.</title>
        <authorList>
            <person name="Badger J.H."/>
            <person name="Hoover T.R."/>
            <person name="Brun Y.V."/>
            <person name="Weiner R.M."/>
            <person name="Laub M.T."/>
            <person name="Alexandre G."/>
            <person name="Mrazek J."/>
            <person name="Ren Q."/>
            <person name="Paulsen I.T."/>
            <person name="Nelson K.E."/>
            <person name="Khouri H.M."/>
            <person name="Radune D."/>
            <person name="Sosa J."/>
            <person name="Dodson R.J."/>
            <person name="Sullivan S.A."/>
            <person name="Rosovitz M.J."/>
            <person name="Madupu R."/>
            <person name="Brinkac L.M."/>
            <person name="Durkin A.S."/>
            <person name="Daugherty S.C."/>
            <person name="Kothari S.P."/>
            <person name="Giglio M.G."/>
            <person name="Zhou L."/>
            <person name="Haft D.H."/>
            <person name="Selengut J.D."/>
            <person name="Davidsen T.M."/>
            <person name="Yang Q."/>
            <person name="Zafar N."/>
            <person name="Ward N.L."/>
        </authorList>
    </citation>
    <scope>NUCLEOTIDE SEQUENCE [LARGE SCALE GENOMIC DNA]</scope>
    <source>
        <strain>ATCC 15444</strain>
    </source>
</reference>
<sequence length="227" mass="24672">MLTTKQKELLLFINDRIKDTGVSPSFDEMKEALDLASKSGIHRLITALEERGFIRRLANRARALEVLKLPDSAIPPPNARQRRDFRPALVTNQGAEAPRIAGMIPLVGRIAAGSPISAIQQENGQVASPGGLPEGDDYFALEVQGDSMIQAGILNGDTVILKRTNTAQTGDIVVALIDGEEATLKRLRRKGASVALEAANPAFETRIFGPDRVEVQGRLVALIRRYE</sequence>
<protein>
    <recommendedName>
        <fullName evidence="1">LexA repressor</fullName>
        <ecNumber evidence="1">3.4.21.88</ecNumber>
    </recommendedName>
</protein>
<feature type="chain" id="PRO_1000001294" description="LexA repressor">
    <location>
        <begin position="1"/>
        <end position="227"/>
    </location>
</feature>
<feature type="DNA-binding region" description="H-T-H motif" evidence="1">
    <location>
        <begin position="26"/>
        <end position="46"/>
    </location>
</feature>
<feature type="active site" description="For autocatalytic cleavage activity" evidence="1">
    <location>
        <position position="147"/>
    </location>
</feature>
<feature type="active site" description="For autocatalytic cleavage activity" evidence="1">
    <location>
        <position position="185"/>
    </location>
</feature>
<feature type="site" description="Cleavage; by autolysis" evidence="1">
    <location>
        <begin position="112"/>
        <end position="113"/>
    </location>
</feature>
<accession>Q0C1A3</accession>
<organism>
    <name type="scientific">Hyphomonas neptunium (strain ATCC 15444)</name>
    <dbReference type="NCBI Taxonomy" id="228405"/>
    <lineage>
        <taxon>Bacteria</taxon>
        <taxon>Pseudomonadati</taxon>
        <taxon>Pseudomonadota</taxon>
        <taxon>Alphaproteobacteria</taxon>
        <taxon>Hyphomonadales</taxon>
        <taxon>Hyphomonadaceae</taxon>
        <taxon>Hyphomonas</taxon>
    </lineage>
</organism>
<dbReference type="EC" id="3.4.21.88" evidence="1"/>
<dbReference type="EMBL" id="CP000158">
    <property type="protein sequence ID" value="ABI75849.1"/>
    <property type="molecule type" value="Genomic_DNA"/>
</dbReference>
<dbReference type="RefSeq" id="WP_011646790.1">
    <property type="nucleotide sequence ID" value="NC_008358.1"/>
</dbReference>
<dbReference type="SMR" id="Q0C1A3"/>
<dbReference type="STRING" id="228405.HNE_1786"/>
<dbReference type="MEROPS" id="S24.001"/>
<dbReference type="KEGG" id="hne:HNE_1786"/>
<dbReference type="eggNOG" id="COG1974">
    <property type="taxonomic scope" value="Bacteria"/>
</dbReference>
<dbReference type="HOGENOM" id="CLU_066192_45_2_5"/>
<dbReference type="Proteomes" id="UP000001959">
    <property type="component" value="Chromosome"/>
</dbReference>
<dbReference type="GO" id="GO:0003677">
    <property type="term" value="F:DNA binding"/>
    <property type="evidence" value="ECO:0007669"/>
    <property type="project" value="UniProtKB-UniRule"/>
</dbReference>
<dbReference type="GO" id="GO:0004252">
    <property type="term" value="F:serine-type endopeptidase activity"/>
    <property type="evidence" value="ECO:0007669"/>
    <property type="project" value="UniProtKB-UniRule"/>
</dbReference>
<dbReference type="GO" id="GO:0006281">
    <property type="term" value="P:DNA repair"/>
    <property type="evidence" value="ECO:0007669"/>
    <property type="project" value="UniProtKB-UniRule"/>
</dbReference>
<dbReference type="GO" id="GO:0006260">
    <property type="term" value="P:DNA replication"/>
    <property type="evidence" value="ECO:0007669"/>
    <property type="project" value="UniProtKB-UniRule"/>
</dbReference>
<dbReference type="GO" id="GO:0045892">
    <property type="term" value="P:negative regulation of DNA-templated transcription"/>
    <property type="evidence" value="ECO:0007669"/>
    <property type="project" value="UniProtKB-UniRule"/>
</dbReference>
<dbReference type="GO" id="GO:0006508">
    <property type="term" value="P:proteolysis"/>
    <property type="evidence" value="ECO:0007669"/>
    <property type="project" value="InterPro"/>
</dbReference>
<dbReference type="GO" id="GO:0009432">
    <property type="term" value="P:SOS response"/>
    <property type="evidence" value="ECO:0007669"/>
    <property type="project" value="UniProtKB-UniRule"/>
</dbReference>
<dbReference type="CDD" id="cd06529">
    <property type="entry name" value="S24_LexA-like"/>
    <property type="match status" value="1"/>
</dbReference>
<dbReference type="FunFam" id="2.10.109.10:FF:000001">
    <property type="entry name" value="LexA repressor"/>
    <property type="match status" value="1"/>
</dbReference>
<dbReference type="Gene3D" id="2.10.109.10">
    <property type="entry name" value="Umud Fragment, subunit A"/>
    <property type="match status" value="1"/>
</dbReference>
<dbReference type="Gene3D" id="1.10.10.10">
    <property type="entry name" value="Winged helix-like DNA-binding domain superfamily/Winged helix DNA-binding domain"/>
    <property type="match status" value="1"/>
</dbReference>
<dbReference type="HAMAP" id="MF_00015">
    <property type="entry name" value="LexA"/>
    <property type="match status" value="1"/>
</dbReference>
<dbReference type="InterPro" id="IPR006200">
    <property type="entry name" value="LexA"/>
</dbReference>
<dbReference type="InterPro" id="IPR039418">
    <property type="entry name" value="LexA-like"/>
</dbReference>
<dbReference type="InterPro" id="IPR036286">
    <property type="entry name" value="LexA/Signal_pep-like_sf"/>
</dbReference>
<dbReference type="InterPro" id="IPR006199">
    <property type="entry name" value="LexA_DNA-bd_dom"/>
</dbReference>
<dbReference type="InterPro" id="IPR050077">
    <property type="entry name" value="LexA_repressor"/>
</dbReference>
<dbReference type="InterPro" id="IPR006197">
    <property type="entry name" value="Peptidase_S24_LexA"/>
</dbReference>
<dbReference type="InterPro" id="IPR015927">
    <property type="entry name" value="Peptidase_S24_S26A/B/C"/>
</dbReference>
<dbReference type="InterPro" id="IPR036388">
    <property type="entry name" value="WH-like_DNA-bd_sf"/>
</dbReference>
<dbReference type="InterPro" id="IPR036390">
    <property type="entry name" value="WH_DNA-bd_sf"/>
</dbReference>
<dbReference type="NCBIfam" id="TIGR00498">
    <property type="entry name" value="lexA"/>
    <property type="match status" value="1"/>
</dbReference>
<dbReference type="PANTHER" id="PTHR33516">
    <property type="entry name" value="LEXA REPRESSOR"/>
    <property type="match status" value="1"/>
</dbReference>
<dbReference type="PANTHER" id="PTHR33516:SF2">
    <property type="entry name" value="LEXA REPRESSOR-RELATED"/>
    <property type="match status" value="1"/>
</dbReference>
<dbReference type="Pfam" id="PF01726">
    <property type="entry name" value="LexA_DNA_bind"/>
    <property type="match status" value="1"/>
</dbReference>
<dbReference type="Pfam" id="PF00717">
    <property type="entry name" value="Peptidase_S24"/>
    <property type="match status" value="1"/>
</dbReference>
<dbReference type="PRINTS" id="PR00726">
    <property type="entry name" value="LEXASERPTASE"/>
</dbReference>
<dbReference type="SUPFAM" id="SSF51306">
    <property type="entry name" value="LexA/Signal peptidase"/>
    <property type="match status" value="1"/>
</dbReference>
<dbReference type="SUPFAM" id="SSF46785">
    <property type="entry name" value="Winged helix' DNA-binding domain"/>
    <property type="match status" value="1"/>
</dbReference>
<gene>
    <name evidence="1" type="primary">lexA</name>
    <name type="ordered locus">HNE_1786</name>
</gene>
<comment type="function">
    <text evidence="1">Represses a number of genes involved in the response to DNA damage (SOS response), including recA and lexA. In the presence of single-stranded DNA, RecA interacts with LexA causing an autocatalytic cleavage which disrupts the DNA-binding part of LexA, leading to derepression of the SOS regulon and eventually DNA repair.</text>
</comment>
<comment type="catalytic activity">
    <reaction evidence="1">
        <text>Hydrolysis of Ala-|-Gly bond in repressor LexA.</text>
        <dbReference type="EC" id="3.4.21.88"/>
    </reaction>
</comment>
<comment type="subunit">
    <text evidence="1">Homodimer.</text>
</comment>
<comment type="similarity">
    <text evidence="1">Belongs to the peptidase S24 family.</text>
</comment>
<keyword id="KW-0068">Autocatalytic cleavage</keyword>
<keyword id="KW-0227">DNA damage</keyword>
<keyword id="KW-0234">DNA repair</keyword>
<keyword id="KW-0235">DNA replication</keyword>
<keyword id="KW-0238">DNA-binding</keyword>
<keyword id="KW-0378">Hydrolase</keyword>
<keyword id="KW-1185">Reference proteome</keyword>
<keyword id="KW-0678">Repressor</keyword>
<keyword id="KW-0742">SOS response</keyword>
<keyword id="KW-0804">Transcription</keyword>
<keyword id="KW-0805">Transcription regulation</keyword>